<organism>
    <name type="scientific">Rhizobium radiobacter</name>
    <name type="common">Agrobacterium tumefaciens</name>
    <name type="synonym">Agrobacterium radiobacter</name>
    <dbReference type="NCBI Taxonomy" id="358"/>
    <lineage>
        <taxon>Bacteria</taxon>
        <taxon>Pseudomonadati</taxon>
        <taxon>Pseudomonadota</taxon>
        <taxon>Alphaproteobacteria</taxon>
        <taxon>Hyphomicrobiales</taxon>
        <taxon>Rhizobiaceae</taxon>
        <taxon>Rhizobium/Agrobacterium group</taxon>
        <taxon>Agrobacterium</taxon>
        <taxon>Agrobacterium tumefaciens complex</taxon>
    </lineage>
</organism>
<accession>P0A3B6</accession>
<accession>Q9F113</accession>
<evidence type="ECO:0000255" key="1">
    <source>
        <dbReference type="HAMAP-Rule" id="MF_00141"/>
    </source>
</evidence>
<proteinExistence type="inferred from homology"/>
<protein>
    <recommendedName>
        <fullName evidence="1">Elongation factor P</fullName>
        <shortName evidence="1">EF-P</shortName>
    </recommendedName>
</protein>
<keyword id="KW-0963">Cytoplasm</keyword>
<keyword id="KW-0251">Elongation factor</keyword>
<keyword id="KW-0648">Protein biosynthesis</keyword>
<comment type="function">
    <text evidence="1">Involved in peptide bond synthesis. Stimulates efficient translation and peptide-bond synthesis on native or reconstituted 70S ribosomes in vitro. Probably functions indirectly by altering the affinity of the ribosome for aminoacyl-tRNA, thus increasing their reactivity as acceptors for peptidyl transferase.</text>
</comment>
<comment type="pathway">
    <text evidence="1">Protein biosynthesis; polypeptide chain elongation.</text>
</comment>
<comment type="subcellular location">
    <subcellularLocation>
        <location evidence="1">Cytoplasm</location>
    </subcellularLocation>
</comment>
<comment type="similarity">
    <text evidence="1">Belongs to the elongation factor P family.</text>
</comment>
<name>EFP_RHIRD</name>
<feature type="chain" id="PRO_0000094186" description="Elongation factor P">
    <location>
        <begin position="1"/>
        <end position="189"/>
    </location>
</feature>
<dbReference type="EMBL" id="AF177860">
    <property type="protein sequence ID" value="AAG09299.1"/>
    <property type="molecule type" value="Genomic_DNA"/>
</dbReference>
<dbReference type="SMR" id="P0A3B6"/>
<dbReference type="eggNOG" id="COG0231">
    <property type="taxonomic scope" value="Bacteria"/>
</dbReference>
<dbReference type="UniPathway" id="UPA00345"/>
<dbReference type="GO" id="GO:0005737">
    <property type="term" value="C:cytoplasm"/>
    <property type="evidence" value="ECO:0007669"/>
    <property type="project" value="UniProtKB-SubCell"/>
</dbReference>
<dbReference type="GO" id="GO:0003746">
    <property type="term" value="F:translation elongation factor activity"/>
    <property type="evidence" value="ECO:0007669"/>
    <property type="project" value="UniProtKB-UniRule"/>
</dbReference>
<dbReference type="GO" id="GO:0043043">
    <property type="term" value="P:peptide biosynthetic process"/>
    <property type="evidence" value="ECO:0007669"/>
    <property type="project" value="InterPro"/>
</dbReference>
<dbReference type="CDD" id="cd04470">
    <property type="entry name" value="S1_EF-P_repeat_1"/>
    <property type="match status" value="1"/>
</dbReference>
<dbReference type="CDD" id="cd05794">
    <property type="entry name" value="S1_EF-P_repeat_2"/>
    <property type="match status" value="1"/>
</dbReference>
<dbReference type="FunFam" id="2.40.50.140:FF:000004">
    <property type="entry name" value="Elongation factor P"/>
    <property type="match status" value="1"/>
</dbReference>
<dbReference type="FunFam" id="2.40.50.140:FF:000009">
    <property type="entry name" value="Elongation factor P"/>
    <property type="match status" value="1"/>
</dbReference>
<dbReference type="Gene3D" id="2.30.30.30">
    <property type="match status" value="1"/>
</dbReference>
<dbReference type="Gene3D" id="2.40.50.140">
    <property type="entry name" value="Nucleic acid-binding proteins"/>
    <property type="match status" value="2"/>
</dbReference>
<dbReference type="HAMAP" id="MF_00141">
    <property type="entry name" value="EF_P"/>
    <property type="match status" value="1"/>
</dbReference>
<dbReference type="InterPro" id="IPR015365">
    <property type="entry name" value="Elong-fact-P_C"/>
</dbReference>
<dbReference type="InterPro" id="IPR012340">
    <property type="entry name" value="NA-bd_OB-fold"/>
</dbReference>
<dbReference type="InterPro" id="IPR014722">
    <property type="entry name" value="Rib_uL2_dom2"/>
</dbReference>
<dbReference type="InterPro" id="IPR020599">
    <property type="entry name" value="Transl_elong_fac_P/YeiP"/>
</dbReference>
<dbReference type="InterPro" id="IPR013185">
    <property type="entry name" value="Transl_elong_KOW-like"/>
</dbReference>
<dbReference type="InterPro" id="IPR001059">
    <property type="entry name" value="Transl_elong_P/YeiP_cen"/>
</dbReference>
<dbReference type="InterPro" id="IPR013852">
    <property type="entry name" value="Transl_elong_P/YeiP_CS"/>
</dbReference>
<dbReference type="InterPro" id="IPR011768">
    <property type="entry name" value="Transl_elongation_fac_P"/>
</dbReference>
<dbReference type="InterPro" id="IPR008991">
    <property type="entry name" value="Translation_prot_SH3-like_sf"/>
</dbReference>
<dbReference type="NCBIfam" id="TIGR00038">
    <property type="entry name" value="efp"/>
    <property type="match status" value="1"/>
</dbReference>
<dbReference type="NCBIfam" id="NF001810">
    <property type="entry name" value="PRK00529.1"/>
    <property type="match status" value="1"/>
</dbReference>
<dbReference type="PANTHER" id="PTHR30053">
    <property type="entry name" value="ELONGATION FACTOR P"/>
    <property type="match status" value="1"/>
</dbReference>
<dbReference type="PANTHER" id="PTHR30053:SF14">
    <property type="entry name" value="TRANSLATION ELONGATION FACTOR KOW-LIKE DOMAIN-CONTAINING PROTEIN"/>
    <property type="match status" value="1"/>
</dbReference>
<dbReference type="Pfam" id="PF01132">
    <property type="entry name" value="EFP"/>
    <property type="match status" value="1"/>
</dbReference>
<dbReference type="Pfam" id="PF08207">
    <property type="entry name" value="EFP_N"/>
    <property type="match status" value="1"/>
</dbReference>
<dbReference type="Pfam" id="PF09285">
    <property type="entry name" value="Elong-fact-P_C"/>
    <property type="match status" value="1"/>
</dbReference>
<dbReference type="PIRSF" id="PIRSF005901">
    <property type="entry name" value="EF-P"/>
    <property type="match status" value="1"/>
</dbReference>
<dbReference type="SMART" id="SM01185">
    <property type="entry name" value="EFP"/>
    <property type="match status" value="1"/>
</dbReference>
<dbReference type="SMART" id="SM00841">
    <property type="entry name" value="Elong-fact-P_C"/>
    <property type="match status" value="1"/>
</dbReference>
<dbReference type="SUPFAM" id="SSF50249">
    <property type="entry name" value="Nucleic acid-binding proteins"/>
    <property type="match status" value="2"/>
</dbReference>
<dbReference type="SUPFAM" id="SSF50104">
    <property type="entry name" value="Translation proteins SH3-like domain"/>
    <property type="match status" value="1"/>
</dbReference>
<dbReference type="PROSITE" id="PS01275">
    <property type="entry name" value="EFP"/>
    <property type="match status" value="1"/>
</dbReference>
<gene>
    <name evidence="1" type="primary">efp</name>
    <name type="synonym">chvH</name>
</gene>
<reference key="1">
    <citation type="journal article" date="2001" name="J. Bacteriol.">
        <title>The chvH locus of Agrobacterium encodes a homologue of an elongation factor involved in protein synthesis.</title>
        <authorList>
            <person name="Peng W.T."/>
            <person name="Banta L.M."/>
            <person name="Charles T.C."/>
            <person name="Nester E.W."/>
        </authorList>
    </citation>
    <scope>NUCLEOTIDE SEQUENCE [GENOMIC DNA]</scope>
    <source>
        <strain>A348</strain>
    </source>
</reference>
<sequence>MVKVIASSVRKGNVLDVDGKLYVVLTAQNFHPGKGTPVTQVDMRRIVDGTKVSERWRTTEQVERAFVEDLNFQFLYEDGEGFHFMNPENYDQVVVDVETMGDQKAYLQEGMTCVLSIHEGNPLAVELPRHVTLEIVETEPVVKGQTASSSYKPAILSNGIRTMVPPHIDAGIRVVIATEDNSYVERAKN</sequence>